<protein>
    <recommendedName>
        <fullName evidence="6">Delta(12) fatty acid desaturase fat-2</fullName>
        <shortName evidence="6">FAT-2</shortName>
        <ecNumber evidence="4">1.14.19.-</ecNumber>
        <ecNumber evidence="2 3 4">1.14.19.6</ecNumber>
    </recommendedName>
    <alternativeName>
        <fullName>Fatty acid desaturase 2</fullName>
    </alternativeName>
</protein>
<dbReference type="EC" id="1.14.19.-" evidence="4"/>
<dbReference type="EC" id="1.14.19.6" evidence="2 3 4"/>
<dbReference type="EMBL" id="AF240777">
    <property type="protein sequence ID" value="AAF63745.1"/>
    <property type="molecule type" value="mRNA"/>
</dbReference>
<dbReference type="EMBL" id="Z82286">
    <property type="protein sequence ID" value="CAB05304.1"/>
    <property type="molecule type" value="Genomic_DNA"/>
</dbReference>
<dbReference type="PIR" id="T26075">
    <property type="entry name" value="T26075"/>
</dbReference>
<dbReference type="RefSeq" id="NP_502560.1">
    <property type="nucleotide sequence ID" value="NM_070159.11"/>
</dbReference>
<dbReference type="SMR" id="G5EGA5"/>
<dbReference type="BioGRID" id="43381">
    <property type="interactions" value="3"/>
</dbReference>
<dbReference type="FunCoup" id="G5EGA5">
    <property type="interactions" value="1"/>
</dbReference>
<dbReference type="STRING" id="6239.W02A2.1a.2"/>
<dbReference type="SwissLipids" id="SLP:000000266"/>
<dbReference type="PaxDb" id="6239-W02A2.1"/>
<dbReference type="PeptideAtlas" id="G5EGA5"/>
<dbReference type="EnsemblMetazoa" id="W02A2.1a.1">
    <property type="protein sequence ID" value="W02A2.1a.1"/>
    <property type="gene ID" value="WBGene00001394"/>
</dbReference>
<dbReference type="GeneID" id="178293"/>
<dbReference type="KEGG" id="cel:CELE_W02A2.1"/>
<dbReference type="AGR" id="WB:WBGene00001394"/>
<dbReference type="CTD" id="178293"/>
<dbReference type="WormBase" id="W02A2.1a">
    <property type="protein sequence ID" value="CE21231"/>
    <property type="gene ID" value="WBGene00001394"/>
    <property type="gene designation" value="fat-2"/>
</dbReference>
<dbReference type="eggNOG" id="ENOG502QQNB">
    <property type="taxonomic scope" value="Eukaryota"/>
</dbReference>
<dbReference type="GeneTree" id="ENSGT00970000196583"/>
<dbReference type="HOGENOM" id="CLU_033094_1_0_1"/>
<dbReference type="InParanoid" id="G5EGA5"/>
<dbReference type="OMA" id="FYLFHNY"/>
<dbReference type="OrthoDB" id="1461976at2759"/>
<dbReference type="PhylomeDB" id="G5EGA5"/>
<dbReference type="BRENDA" id="1.14.19.39">
    <property type="organism ID" value="1045"/>
</dbReference>
<dbReference type="BRENDA" id="1.14.19.6">
    <property type="organism ID" value="1045"/>
</dbReference>
<dbReference type="UniPathway" id="UPA00658"/>
<dbReference type="PRO" id="PR:G5EGA5"/>
<dbReference type="Proteomes" id="UP000001940">
    <property type="component" value="Chromosome IV"/>
</dbReference>
<dbReference type="Bgee" id="WBGene00001394">
    <property type="expression patterns" value="Expressed in larva and 4 other cell types or tissues"/>
</dbReference>
<dbReference type="ExpressionAtlas" id="G5EGA5">
    <property type="expression patterns" value="baseline and differential"/>
</dbReference>
<dbReference type="GO" id="GO:0016020">
    <property type="term" value="C:membrane"/>
    <property type="evidence" value="ECO:0007669"/>
    <property type="project" value="UniProtKB-SubCell"/>
</dbReference>
<dbReference type="GO" id="GO:0102985">
    <property type="term" value="F:acyl-CoA (9+3)-desaturase activity"/>
    <property type="evidence" value="ECO:0007669"/>
    <property type="project" value="UniProtKB-EC"/>
</dbReference>
<dbReference type="GO" id="GO:0016491">
    <property type="term" value="F:oxidoreductase activity"/>
    <property type="evidence" value="ECO:0000318"/>
    <property type="project" value="GO_Central"/>
</dbReference>
<dbReference type="GO" id="GO:0004768">
    <property type="term" value="F:stearoyl-CoA 9-desaturase activity"/>
    <property type="evidence" value="ECO:0000314"/>
    <property type="project" value="WormBase"/>
</dbReference>
<dbReference type="GO" id="GO:0040002">
    <property type="term" value="P:collagen and cuticulin-based cuticle development"/>
    <property type="evidence" value="ECO:0000315"/>
    <property type="project" value="WormBase"/>
</dbReference>
<dbReference type="GO" id="GO:0030497">
    <property type="term" value="P:fatty acid elongation"/>
    <property type="evidence" value="ECO:0000315"/>
    <property type="project" value="WormBase"/>
</dbReference>
<dbReference type="GO" id="GO:0045087">
    <property type="term" value="P:innate immune response"/>
    <property type="evidence" value="ECO:0000270"/>
    <property type="project" value="WormBase"/>
</dbReference>
<dbReference type="GO" id="GO:0022414">
    <property type="term" value="P:reproductive process"/>
    <property type="evidence" value="ECO:0000315"/>
    <property type="project" value="WormBase"/>
</dbReference>
<dbReference type="GO" id="GO:0006636">
    <property type="term" value="P:unsaturated fatty acid biosynthetic process"/>
    <property type="evidence" value="ECO:0000315"/>
    <property type="project" value="WormBase"/>
</dbReference>
<dbReference type="CDD" id="cd03507">
    <property type="entry name" value="Delta12-FADS-like"/>
    <property type="match status" value="1"/>
</dbReference>
<dbReference type="InterPro" id="IPR005804">
    <property type="entry name" value="FA_desaturase_dom"/>
</dbReference>
<dbReference type="InterPro" id="IPR021863">
    <property type="entry name" value="FAS_N"/>
</dbReference>
<dbReference type="InterPro" id="IPR012171">
    <property type="entry name" value="Fatty_acid_desaturase"/>
</dbReference>
<dbReference type="PANTHER" id="PTHR32100">
    <property type="entry name" value="OMEGA-6 FATTY ACID DESATURASE, CHLOROPLASTIC"/>
    <property type="match status" value="1"/>
</dbReference>
<dbReference type="Pfam" id="PF11960">
    <property type="entry name" value="DUF3474"/>
    <property type="match status" value="1"/>
</dbReference>
<dbReference type="Pfam" id="PF00487">
    <property type="entry name" value="FA_desaturase"/>
    <property type="match status" value="1"/>
</dbReference>
<evidence type="ECO:0000255" key="1"/>
<evidence type="ECO:0000269" key="2">
    <source>
    </source>
</evidence>
<evidence type="ECO:0000269" key="3">
    <source>
    </source>
</evidence>
<evidence type="ECO:0000269" key="4">
    <source>
    </source>
</evidence>
<evidence type="ECO:0000269" key="5">
    <source>
    </source>
</evidence>
<evidence type="ECO:0000303" key="6">
    <source>
    </source>
</evidence>
<evidence type="ECO:0000305" key="7"/>
<evidence type="ECO:0000305" key="8">
    <source>
    </source>
</evidence>
<evidence type="ECO:0000305" key="9">
    <source>
    </source>
</evidence>
<evidence type="ECO:0000305" key="10">
    <source>
    </source>
</evidence>
<name>FAT2_CAEEL</name>
<sequence length="376" mass="43463">MTIATKVNTNKKDLDTIKVPELPSVAAVKAAIPEHCFVKDPLTSISYLIKDYVLLAGLYFAVPYIEHYLGWIGLLGWYWAMGIVGSALFCVGHDCGHGSFSDYEWLNDLCGHLAHAPILAPFWPWQKSHRQHHQYTSHVEKDKGHPWVTEEDYNNRTAIEKYFAVIPISGWLRWNPIYTIVGLPDGSHFWPWSRLFETTEDRVKCAVSGVACAICAYIAFVLCDYSVYTFVKYYYIPLLFQGLILVIITYLQHQNEDIEVYEADEWGFVRGQTQTIDRHWGFGLDNIMHNITNGHVAHHFFFTKIPHYHLLEATPAIKKALEPLKDTQYGYKREVNYNWFFKYLHYNVTLDYLTHKAKGVLQYRSGVEAAKAKKAQ</sequence>
<reference key="1">
    <citation type="journal article" date="2000" name="Arch. Biochem. Biophys.">
        <title>Identification and characterization of an animal delta(12) fatty acid desaturase gene by heterologous expression in Saccharomyces cerevisiae.</title>
        <authorList>
            <person name="Peyou-Ndi M.M."/>
            <person name="Watts J.L."/>
            <person name="Browse J."/>
        </authorList>
    </citation>
    <scope>NUCLEOTIDE SEQUENCE [MRNA]</scope>
    <scope>FUNCTION</scope>
    <scope>CATALYTIC ACTIVITY</scope>
</reference>
<reference key="2">
    <citation type="journal article" date="1998" name="Science">
        <title>Genome sequence of the nematode C. elegans: a platform for investigating biology.</title>
        <authorList>
            <consortium name="The C. elegans sequencing consortium"/>
        </authorList>
    </citation>
    <scope>NUCLEOTIDE SEQUENCE [LARGE SCALE GENOMIC DNA]</scope>
    <source>
        <strain>Bristol N2</strain>
    </source>
</reference>
<reference key="3">
    <citation type="journal article" date="2002" name="Proc. Natl. Acad. Sci. U.S.A.">
        <title>Genetic dissection of polyunsaturated fatty acid synthesis in Caenorhabditis elegans.</title>
        <authorList>
            <person name="Watts J.L."/>
            <person name="Browse J."/>
        </authorList>
    </citation>
    <scope>FUNCTION</scope>
    <scope>CATALYTIC ACTIVITY</scope>
    <scope>PATHWAY</scope>
</reference>
<reference key="4">
    <citation type="journal article" date="2011" name="J. Biol. Chem.">
        <title>Caenorhabditis elegans Delta12-desaturase FAT-2 is a bifunctional desaturase able to desaturate a diverse range of fatty acid substrates at the Delta12 and Delta15 positions.</title>
        <authorList>
            <person name="Zhou X.-R."/>
            <person name="Green A.G."/>
            <person name="Singh S.P."/>
        </authorList>
    </citation>
    <scope>FUNCTION</scope>
    <scope>CATALYTIC ACTIVITY</scope>
</reference>
<reference key="5">
    <citation type="journal article" date="2016" name="Biochim. Biophys. Acta">
        <title>The cytochrome b5 reductase HPO-19 is required for biosynthesis of polyunsaturated fatty acids in Caenorhabditis elegans.</title>
        <authorList>
            <person name="Zhang Y."/>
            <person name="Wang H."/>
            <person name="Zhang J."/>
            <person name="Hu Y."/>
            <person name="Zhang L."/>
            <person name="Wu X."/>
            <person name="Su X."/>
            <person name="Li T."/>
            <person name="Zou X."/>
            <person name="Liang B."/>
        </authorList>
    </citation>
    <scope>FUNCTION</scope>
    <scope>CATALYTIC ACTIVITY</scope>
    <scope>PATHWAY</scope>
    <scope>DISRUPTION PHENOTYPE</scope>
</reference>
<gene>
    <name type="primary">fat-2</name>
    <name type="ORF">W02A2.1</name>
</gene>
<proteinExistence type="evidence at protein level"/>
<feature type="chain" id="PRO_0000423384" description="Delta(12) fatty acid desaturase fat-2">
    <location>
        <begin position="1"/>
        <end position="376"/>
    </location>
</feature>
<feature type="transmembrane region" description="Helical" evidence="1">
    <location>
        <begin position="45"/>
        <end position="65"/>
    </location>
</feature>
<feature type="transmembrane region" description="Helical" evidence="1">
    <location>
        <begin position="69"/>
        <end position="89"/>
    </location>
</feature>
<feature type="transmembrane region" description="Helical" evidence="1">
    <location>
        <begin position="203"/>
        <end position="223"/>
    </location>
</feature>
<feature type="transmembrane region" description="Helical" evidence="1">
    <location>
        <begin position="228"/>
        <end position="248"/>
    </location>
</feature>
<organism>
    <name type="scientific">Caenorhabditis elegans</name>
    <dbReference type="NCBI Taxonomy" id="6239"/>
    <lineage>
        <taxon>Eukaryota</taxon>
        <taxon>Metazoa</taxon>
        <taxon>Ecdysozoa</taxon>
        <taxon>Nematoda</taxon>
        <taxon>Chromadorea</taxon>
        <taxon>Rhabditida</taxon>
        <taxon>Rhabditina</taxon>
        <taxon>Rhabditomorpha</taxon>
        <taxon>Rhabditoidea</taxon>
        <taxon>Rhabditidae</taxon>
        <taxon>Peloderinae</taxon>
        <taxon>Caenorhabditis</taxon>
    </lineage>
</organism>
<keyword id="KW-0275">Fatty acid biosynthesis</keyword>
<keyword id="KW-0276">Fatty acid metabolism</keyword>
<keyword id="KW-0444">Lipid biosynthesis</keyword>
<keyword id="KW-0443">Lipid metabolism</keyword>
<keyword id="KW-0472">Membrane</keyword>
<keyword id="KW-0560">Oxidoreductase</keyword>
<keyword id="KW-1185">Reference proteome</keyword>
<keyword id="KW-0812">Transmembrane</keyword>
<keyword id="KW-1133">Transmembrane helix</keyword>
<accession>G5EGA5</accession>
<comment type="function">
    <text evidence="2 3 4 5 8">Can function as a Delta(12)/Delta(15) bifunctional desaturase and behaves as a nu +3' desaturase. Introduces a double bond in the fatty acid chain three carbons away from an existing double bond to biosynthesize polyunsaturated fatty acids (PUFAs) endogenously (PUFAs are essential for membrane structure and many cellular and physiological processes). Acts on a number of substrates like oleoyl-CoA ((9Z)-octadecenoyl-CoA, 18:1n-9), palmitoleoyl-CoA ((9Z)-hexadecenoyl-CoA, 16:1n-7), and gamma-linolenoyl-CoA ((6Z,9Z,12Z)-octadecatrienoyl-CoA, 18:3n-6), to generate linoleoyl-CoA ((9Z,12Z)-octadecadienoyl-CoA, 18:2n-6), (9Z,12Z)-hexadecadienoyl-CoA (16:2n-4) and (6Z,9Z,12Z,15Z)-octadecatetraenoyl-CoA (18:4n-3) respectively (PubMed:10775428, PubMed:11972048, PubMed:22041902, PubMed:26806391). Unlike plants, Caenorhabditis elegans desaturases seem to use fatty acyl-CoAs as substrates (Probable).</text>
</comment>
<comment type="catalytic activity">
    <reaction evidence="2 3 4 5">
        <text>(9Z)-octadecenoyl-CoA + 2 Fe(II)-[cytochrome b5] + O2 + 2 H(+) = (9Z,12Z)-octadecadienoyl-CoA + 2 Fe(III)-[cytochrome b5] + 2 H2O</text>
        <dbReference type="Rhea" id="RHEA:25856"/>
        <dbReference type="Rhea" id="RHEA-COMP:10438"/>
        <dbReference type="Rhea" id="RHEA-COMP:10439"/>
        <dbReference type="ChEBI" id="CHEBI:15377"/>
        <dbReference type="ChEBI" id="CHEBI:15378"/>
        <dbReference type="ChEBI" id="CHEBI:15379"/>
        <dbReference type="ChEBI" id="CHEBI:29033"/>
        <dbReference type="ChEBI" id="CHEBI:29034"/>
        <dbReference type="ChEBI" id="CHEBI:57383"/>
        <dbReference type="ChEBI" id="CHEBI:57387"/>
        <dbReference type="EC" id="1.14.19.6"/>
    </reaction>
    <physiologicalReaction direction="left-to-right" evidence="5 8 9 10">
        <dbReference type="Rhea" id="RHEA:25857"/>
    </physiologicalReaction>
</comment>
<comment type="catalytic activity">
    <reaction evidence="2 4">
        <text>(9Z)-hexadecenoyl-CoA + 2 Fe(II)-[cytochrome b5] + O2 + 2 H(+) = (9Z,12Z)-hexadecadienoyl-CoA + 2 Fe(III)-[cytochrome b5] + 2 H2O</text>
        <dbReference type="Rhea" id="RHEA:45096"/>
        <dbReference type="Rhea" id="RHEA-COMP:10438"/>
        <dbReference type="Rhea" id="RHEA-COMP:10439"/>
        <dbReference type="ChEBI" id="CHEBI:15377"/>
        <dbReference type="ChEBI" id="CHEBI:15378"/>
        <dbReference type="ChEBI" id="CHEBI:15379"/>
        <dbReference type="ChEBI" id="CHEBI:29033"/>
        <dbReference type="ChEBI" id="CHEBI:29034"/>
        <dbReference type="ChEBI" id="CHEBI:61540"/>
        <dbReference type="ChEBI" id="CHEBI:76552"/>
        <dbReference type="EC" id="1.14.19.6"/>
    </reaction>
    <physiologicalReaction direction="left-to-right" evidence="8 10">
        <dbReference type="Rhea" id="RHEA:45097"/>
    </physiologicalReaction>
</comment>
<comment type="catalytic activity">
    <reaction evidence="4">
        <text>(9Z,12Z)-octadecadienoyl-CoA + 2 Fe(II)-[cytochrome b5] + O2 + 2 H(+) = (9Z,12Z,15Z)-octadecatrienoyl-CoA + 2 Fe(III)-[cytochrome b5] + 2 H2O</text>
        <dbReference type="Rhea" id="RHEA:66040"/>
        <dbReference type="Rhea" id="RHEA-COMP:10438"/>
        <dbReference type="Rhea" id="RHEA-COMP:10439"/>
        <dbReference type="ChEBI" id="CHEBI:15377"/>
        <dbReference type="ChEBI" id="CHEBI:15378"/>
        <dbReference type="ChEBI" id="CHEBI:15379"/>
        <dbReference type="ChEBI" id="CHEBI:29033"/>
        <dbReference type="ChEBI" id="CHEBI:29034"/>
        <dbReference type="ChEBI" id="CHEBI:57383"/>
        <dbReference type="ChEBI" id="CHEBI:74034"/>
    </reaction>
    <physiologicalReaction direction="left-to-right" evidence="10">
        <dbReference type="Rhea" id="RHEA:66041"/>
    </physiologicalReaction>
</comment>
<comment type="catalytic activity">
    <reaction evidence="4">
        <text>(9Z)-heptadecenoyl-CoA + 2 Fe(II)-[cytochrome b5] + O2 + 2 H(+) = (9Z,12Z)-heptadecadienoyl-CoA + 2 Fe(III)-[cytochrome b5] + 2 H2O</text>
        <dbReference type="Rhea" id="RHEA:42196"/>
        <dbReference type="Rhea" id="RHEA-COMP:10438"/>
        <dbReference type="Rhea" id="RHEA-COMP:10439"/>
        <dbReference type="ChEBI" id="CHEBI:15377"/>
        <dbReference type="ChEBI" id="CHEBI:15378"/>
        <dbReference type="ChEBI" id="CHEBI:15379"/>
        <dbReference type="ChEBI" id="CHEBI:29033"/>
        <dbReference type="ChEBI" id="CHEBI:29034"/>
        <dbReference type="ChEBI" id="CHEBI:74308"/>
        <dbReference type="ChEBI" id="CHEBI:78690"/>
    </reaction>
    <physiologicalReaction direction="left-to-right" evidence="10">
        <dbReference type="Rhea" id="RHEA:42197"/>
    </physiologicalReaction>
</comment>
<comment type="catalytic activity">
    <reaction evidence="4">
        <text>(9Z)-pentadecenoyl-CoA + 2 Fe(II)-[cytochrome b5] + O2 + 2 H(+) = (9Z,12Z)-pentadecadienoyl-CoA + 2 Fe(III)-[cytochrome b5] + 2 H2O</text>
        <dbReference type="Rhea" id="RHEA:42192"/>
        <dbReference type="Rhea" id="RHEA-COMP:10438"/>
        <dbReference type="Rhea" id="RHEA-COMP:10439"/>
        <dbReference type="ChEBI" id="CHEBI:15377"/>
        <dbReference type="ChEBI" id="CHEBI:15378"/>
        <dbReference type="ChEBI" id="CHEBI:15379"/>
        <dbReference type="ChEBI" id="CHEBI:29033"/>
        <dbReference type="ChEBI" id="CHEBI:29034"/>
        <dbReference type="ChEBI" id="CHEBI:74310"/>
        <dbReference type="ChEBI" id="CHEBI:78684"/>
    </reaction>
    <physiologicalReaction direction="left-to-right" evidence="10">
        <dbReference type="Rhea" id="RHEA:42193"/>
    </physiologicalReaction>
</comment>
<comment type="catalytic activity">
    <reaction evidence="4">
        <text>(6Z,9Z,12Z)-octadecatrienoyl-CoA + 2 Fe(II)-[cytochrome b5] + O2 + 2 H(+) = (6Z,9Z,12Z,15Z)-octadecatetraenoyl-CoA + 2 Fe(III)-[cytochrome b5] + 2 H2O</text>
        <dbReference type="Rhea" id="RHEA:42180"/>
        <dbReference type="Rhea" id="RHEA-COMP:10438"/>
        <dbReference type="Rhea" id="RHEA-COMP:10439"/>
        <dbReference type="ChEBI" id="CHEBI:15377"/>
        <dbReference type="ChEBI" id="CHEBI:15378"/>
        <dbReference type="ChEBI" id="CHEBI:15379"/>
        <dbReference type="ChEBI" id="CHEBI:29033"/>
        <dbReference type="ChEBI" id="CHEBI:29034"/>
        <dbReference type="ChEBI" id="CHEBI:57363"/>
        <dbReference type="ChEBI" id="CHEBI:71489"/>
    </reaction>
    <physiologicalReaction direction="left-to-right" evidence="10">
        <dbReference type="Rhea" id="RHEA:42181"/>
    </physiologicalReaction>
</comment>
<comment type="catalytic activity">
    <reaction evidence="4">
        <text>(9Z)-tetradecenoyl-CoA + 2 Fe(II)-[cytochrome b5] + O2 + 2 H(+) = (9Z,12Z)-tetradecadienoyl-CoA + 2 Fe(III)-[cytochrome b5] + 2 H2O</text>
        <dbReference type="Rhea" id="RHEA:42176"/>
        <dbReference type="Rhea" id="RHEA-COMP:10438"/>
        <dbReference type="Rhea" id="RHEA-COMP:10439"/>
        <dbReference type="ChEBI" id="CHEBI:15377"/>
        <dbReference type="ChEBI" id="CHEBI:15378"/>
        <dbReference type="ChEBI" id="CHEBI:15379"/>
        <dbReference type="ChEBI" id="CHEBI:29033"/>
        <dbReference type="ChEBI" id="CHEBI:29034"/>
        <dbReference type="ChEBI" id="CHEBI:65060"/>
        <dbReference type="ChEBI" id="CHEBI:78680"/>
    </reaction>
    <physiologicalReaction direction="left-to-right" evidence="10">
        <dbReference type="Rhea" id="RHEA:42177"/>
    </physiologicalReaction>
</comment>
<comment type="pathway">
    <text evidence="3 5">Lipid metabolism; polyunsaturated fatty acid biosynthesis.</text>
</comment>
<comment type="subcellular location">
    <subcellularLocation>
        <location evidence="7">Membrane</location>
        <topology evidence="7">Multi-pass membrane protein</topology>
    </subcellularLocation>
</comment>
<comment type="disruption phenotype">
    <text evidence="5">The fat-2(wa17) mutant leads to high levels of C18:1n-9 and low levels of PUFAs.</text>
</comment>
<comment type="miscellaneous">
    <text evidence="5">HPO-19 and T05H4.4 are cytochrome b5 reductases required for PUFA desaturation in Caenorhabditis elegans. HPO-19 knockdown or mutation alters FAT-2 desaturase activity. Although FAT-2 lacks a cytochrome b5 domain, its N-terminal contains a DUF3474 domain that may possess some oxidoreductase activity for electron transfer, obviating the need for an extra cytochrome b5 enzyme, but still requiring cytochrome b5 reductase HPO-19/T05H4.4 to become activated.</text>
</comment>
<comment type="similarity">
    <text evidence="7">Belongs to the fatty acid desaturase type 1 family.</text>
</comment>